<keyword id="KW-0007">Acetylation</keyword>
<keyword id="KW-0963">Cytoplasm</keyword>
<keyword id="KW-0479">Metal-binding</keyword>
<keyword id="KW-0520">NAD</keyword>
<keyword id="KW-0560">Oxidoreductase</keyword>
<keyword id="KW-0597">Phosphoprotein</keyword>
<keyword id="KW-0862">Zinc</keyword>
<feature type="initiator methionine" description="Removed" evidence="3">
    <location>
        <position position="1"/>
    </location>
</feature>
<feature type="chain" id="PRO_0000160665" description="Alcohol dehydrogenase 1C">
    <location>
        <begin position="2"/>
        <end position="375"/>
    </location>
</feature>
<feature type="binding site" evidence="3">
    <location>
        <position position="47"/>
    </location>
    <ligand>
        <name>Zn(2+)</name>
        <dbReference type="ChEBI" id="CHEBI:29105"/>
        <label>1</label>
        <note>catalytic</note>
    </ligand>
</feature>
<feature type="binding site" evidence="3">
    <location>
        <position position="68"/>
    </location>
    <ligand>
        <name>Zn(2+)</name>
        <dbReference type="ChEBI" id="CHEBI:29105"/>
        <label>1</label>
        <note>catalytic</note>
    </ligand>
</feature>
<feature type="binding site" evidence="3">
    <location>
        <position position="98"/>
    </location>
    <ligand>
        <name>Zn(2+)</name>
        <dbReference type="ChEBI" id="CHEBI:29105"/>
        <label>2</label>
    </ligand>
</feature>
<feature type="binding site" evidence="3">
    <location>
        <position position="101"/>
    </location>
    <ligand>
        <name>Zn(2+)</name>
        <dbReference type="ChEBI" id="CHEBI:29105"/>
        <label>2</label>
    </ligand>
</feature>
<feature type="binding site" evidence="3">
    <location>
        <position position="104"/>
    </location>
    <ligand>
        <name>Zn(2+)</name>
        <dbReference type="ChEBI" id="CHEBI:29105"/>
        <label>2</label>
    </ligand>
</feature>
<feature type="binding site" evidence="3">
    <location>
        <position position="112"/>
    </location>
    <ligand>
        <name>Zn(2+)</name>
        <dbReference type="ChEBI" id="CHEBI:29105"/>
        <label>2</label>
    </ligand>
</feature>
<feature type="binding site" evidence="3">
    <location>
        <position position="175"/>
    </location>
    <ligand>
        <name>Zn(2+)</name>
        <dbReference type="ChEBI" id="CHEBI:29105"/>
        <label>1</label>
        <note>catalytic</note>
    </ligand>
</feature>
<feature type="binding site" evidence="3">
    <location>
        <begin position="200"/>
        <end position="205"/>
    </location>
    <ligand>
        <name>NAD(+)</name>
        <dbReference type="ChEBI" id="CHEBI:57540"/>
    </ligand>
</feature>
<feature type="binding site" evidence="3">
    <location>
        <position position="224"/>
    </location>
    <ligand>
        <name>NAD(+)</name>
        <dbReference type="ChEBI" id="CHEBI:57540"/>
    </ligand>
</feature>
<feature type="binding site" evidence="3">
    <location>
        <position position="229"/>
    </location>
    <ligand>
        <name>NAD(+)</name>
        <dbReference type="ChEBI" id="CHEBI:57540"/>
    </ligand>
</feature>
<feature type="binding site" evidence="3">
    <location>
        <position position="270"/>
    </location>
    <ligand>
        <name>NAD(+)</name>
        <dbReference type="ChEBI" id="CHEBI:57540"/>
    </ligand>
</feature>
<feature type="binding site" evidence="3">
    <location>
        <begin position="293"/>
        <end position="295"/>
    </location>
    <ligand>
        <name>NAD(+)</name>
        <dbReference type="ChEBI" id="CHEBI:57540"/>
    </ligand>
</feature>
<feature type="binding site" evidence="3">
    <location>
        <begin position="318"/>
        <end position="320"/>
    </location>
    <ligand>
        <name>NAD(+)</name>
        <dbReference type="ChEBI" id="CHEBI:57540"/>
    </ligand>
</feature>
<feature type="binding site" evidence="3">
    <location>
        <position position="370"/>
    </location>
    <ligand>
        <name>NAD(+)</name>
        <dbReference type="ChEBI" id="CHEBI:57540"/>
    </ligand>
</feature>
<feature type="modified residue" description="N-acetylserine" evidence="3">
    <location>
        <position position="2"/>
    </location>
</feature>
<feature type="modified residue" description="Phosphoserine" evidence="2">
    <location>
        <position position="23"/>
    </location>
</feature>
<accession>O97959</accession>
<evidence type="ECO:0000250" key="1"/>
<evidence type="ECO:0000250" key="2">
    <source>
        <dbReference type="UniProtKB" id="P00325"/>
    </source>
</evidence>
<evidence type="ECO:0000250" key="3">
    <source>
        <dbReference type="UniProtKB" id="P00326"/>
    </source>
</evidence>
<evidence type="ECO:0000269" key="4">
    <source>
    </source>
</evidence>
<evidence type="ECO:0000305" key="5"/>
<reference key="1">
    <citation type="journal article" date="1999" name="Mol. Biol. Evol.">
        <title>Evolution of class I alcohol dehydrogenase genes in catarrhine primates: gene conversion, substitution rates, and gene regulation.</title>
        <authorList>
            <person name="Cheung B."/>
            <person name="Holmes R.S."/>
            <person name="Easteal S."/>
            <person name="Beacham I.R."/>
        </authorList>
    </citation>
    <scope>NUCLEOTIDE SEQUENCE [MRNA]</scope>
    <scope>TISSUE SPECIFICITY</scope>
    <source>
        <tissue>Kidney</tissue>
    </source>
</reference>
<organism>
    <name type="scientific">Papio hamadryas</name>
    <name type="common">Hamadryas baboon</name>
    <dbReference type="NCBI Taxonomy" id="9557"/>
    <lineage>
        <taxon>Eukaryota</taxon>
        <taxon>Metazoa</taxon>
        <taxon>Chordata</taxon>
        <taxon>Craniata</taxon>
        <taxon>Vertebrata</taxon>
        <taxon>Euteleostomi</taxon>
        <taxon>Mammalia</taxon>
        <taxon>Eutheria</taxon>
        <taxon>Euarchontoglires</taxon>
        <taxon>Primates</taxon>
        <taxon>Haplorrhini</taxon>
        <taxon>Catarrhini</taxon>
        <taxon>Cercopithecidae</taxon>
        <taxon>Cercopithecinae</taxon>
        <taxon>Papio</taxon>
    </lineage>
</organism>
<gene>
    <name type="primary">ADH1C</name>
    <name type="synonym">ADH3</name>
</gene>
<proteinExistence type="evidence at transcript level"/>
<comment type="function">
    <text evidence="3">Alcohol dehydrogenase. Exhibits high activity for ethanol oxidation and plays a major role in ethanol catabolism.</text>
</comment>
<comment type="catalytic activity">
    <reaction evidence="3">
        <text>a primary alcohol + NAD(+) = an aldehyde + NADH + H(+)</text>
        <dbReference type="Rhea" id="RHEA:10736"/>
        <dbReference type="ChEBI" id="CHEBI:15378"/>
        <dbReference type="ChEBI" id="CHEBI:15734"/>
        <dbReference type="ChEBI" id="CHEBI:17478"/>
        <dbReference type="ChEBI" id="CHEBI:57540"/>
        <dbReference type="ChEBI" id="CHEBI:57945"/>
        <dbReference type="EC" id="1.1.1.1"/>
    </reaction>
</comment>
<comment type="catalytic activity">
    <reaction evidence="3">
        <text>ethanol + NAD(+) = acetaldehyde + NADH + H(+)</text>
        <dbReference type="Rhea" id="RHEA:25290"/>
        <dbReference type="ChEBI" id="CHEBI:15343"/>
        <dbReference type="ChEBI" id="CHEBI:15378"/>
        <dbReference type="ChEBI" id="CHEBI:16236"/>
        <dbReference type="ChEBI" id="CHEBI:57540"/>
        <dbReference type="ChEBI" id="CHEBI:57945"/>
        <dbReference type="EC" id="1.1.1.1"/>
    </reaction>
    <physiologicalReaction direction="left-to-right" evidence="3">
        <dbReference type="Rhea" id="RHEA:25291"/>
    </physiologicalReaction>
</comment>
<comment type="cofactor">
    <cofactor evidence="3">
        <name>Zn(2+)</name>
        <dbReference type="ChEBI" id="CHEBI:29105"/>
    </cofactor>
    <text evidence="3">Binds 2 Zn(2+) ions per subunit.</text>
</comment>
<comment type="subunit">
    <text evidence="3">Dimer of identical or non-identical chains of class I alcohol dehydrogenase: ADH1A, ADH1B, and ADH1C.</text>
</comment>
<comment type="subcellular location">
    <subcellularLocation>
        <location evidence="1">Cytoplasm</location>
    </subcellularLocation>
</comment>
<comment type="tissue specificity">
    <text evidence="4">Expressed in kidney.</text>
</comment>
<comment type="miscellaneous">
    <text evidence="3">There are 7 different ADH's isozymes in human: three belongs to class-I: ADH1A, ADH1B, and ADH1C, one to class-II: ADH4, one to class-III: ADH5, one to class-IV: ADH7 and one to class-V: ADH6.</text>
</comment>
<comment type="similarity">
    <text evidence="5">Belongs to the zinc-containing alcohol dehydrogenase family.</text>
</comment>
<sequence>MSTAGKVIKCKAAVLWEVKKPFSIEEVEVAPPKAHEVRIKMVAVGICRSDDHVVSGTLVTPLPAILGHEAAGIVEGVGEGVTTVKPGDKVIPLFTPQCGKCRVCKNPESNYCFKNDLSNPRGTMQDGTRRFTCGGKPIHHFLGISTFSQYTVVDENAVAKIDAASPLEKVCLIGCGFSTGYGPAVKVAKVTPGSTCAVFGLGGVGLSAVMGCKAAGAARIIAVDINKDKFAKAKELGATECINPQDYKKPIQEVLKEMTDGGVDFSFEVIGRLDTIMASLLCCHEACGTSVIVGVPPDSQNLSINPVLLLTGRTWKGAIFGGFKSKESVPKLVSDFMAKKFSLDALITNVLPFEKINEGFDLLRSGKSIRTILMF</sequence>
<name>ADH1G_PAPHA</name>
<dbReference type="EC" id="1.1.1.1" evidence="3"/>
<dbReference type="EMBL" id="L30113">
    <property type="protein sequence ID" value="AAD09950.1"/>
    <property type="molecule type" value="mRNA"/>
</dbReference>
<dbReference type="SMR" id="O97959"/>
<dbReference type="GO" id="GO:0005829">
    <property type="term" value="C:cytosol"/>
    <property type="evidence" value="ECO:0007669"/>
    <property type="project" value="TreeGrafter"/>
</dbReference>
<dbReference type="GO" id="GO:0004022">
    <property type="term" value="F:alcohol dehydrogenase (NAD+) activity"/>
    <property type="evidence" value="ECO:0000250"/>
    <property type="project" value="UniProtKB"/>
</dbReference>
<dbReference type="GO" id="GO:0004745">
    <property type="term" value="F:all-trans-retinol dehydrogenase (NAD+) activity"/>
    <property type="evidence" value="ECO:0007669"/>
    <property type="project" value="TreeGrafter"/>
</dbReference>
<dbReference type="GO" id="GO:0120542">
    <property type="term" value="F:ethanol dehydrogenase (NAD+) activity"/>
    <property type="evidence" value="ECO:0007669"/>
    <property type="project" value="RHEA"/>
</dbReference>
<dbReference type="GO" id="GO:0008270">
    <property type="term" value="F:zinc ion binding"/>
    <property type="evidence" value="ECO:0007669"/>
    <property type="project" value="InterPro"/>
</dbReference>
<dbReference type="GO" id="GO:0042573">
    <property type="term" value="P:retinoic acid metabolic process"/>
    <property type="evidence" value="ECO:0007669"/>
    <property type="project" value="TreeGrafter"/>
</dbReference>
<dbReference type="GO" id="GO:0042572">
    <property type="term" value="P:retinol metabolic process"/>
    <property type="evidence" value="ECO:0007669"/>
    <property type="project" value="TreeGrafter"/>
</dbReference>
<dbReference type="CDD" id="cd08299">
    <property type="entry name" value="alcohol_DH_class_I_II_IV"/>
    <property type="match status" value="1"/>
</dbReference>
<dbReference type="FunFam" id="3.40.50.720:FF:000003">
    <property type="entry name" value="S-(hydroxymethyl)glutathione dehydrogenase"/>
    <property type="match status" value="1"/>
</dbReference>
<dbReference type="FunFam" id="3.90.180.10:FF:000001">
    <property type="entry name" value="S-(hydroxymethyl)glutathione dehydrogenase"/>
    <property type="match status" value="1"/>
</dbReference>
<dbReference type="Gene3D" id="3.90.180.10">
    <property type="entry name" value="Medium-chain alcohol dehydrogenases, catalytic domain"/>
    <property type="match status" value="1"/>
</dbReference>
<dbReference type="Gene3D" id="3.40.50.720">
    <property type="entry name" value="NAD(P)-binding Rossmann-like Domain"/>
    <property type="match status" value="1"/>
</dbReference>
<dbReference type="InterPro" id="IPR013149">
    <property type="entry name" value="ADH-like_C"/>
</dbReference>
<dbReference type="InterPro" id="IPR013154">
    <property type="entry name" value="ADH-like_N"/>
</dbReference>
<dbReference type="InterPro" id="IPR002328">
    <property type="entry name" value="ADH_Zn_CS"/>
</dbReference>
<dbReference type="InterPro" id="IPR011032">
    <property type="entry name" value="GroES-like_sf"/>
</dbReference>
<dbReference type="InterPro" id="IPR036291">
    <property type="entry name" value="NAD(P)-bd_dom_sf"/>
</dbReference>
<dbReference type="InterPro" id="IPR020843">
    <property type="entry name" value="PKS_ER"/>
</dbReference>
<dbReference type="PANTHER" id="PTHR43880">
    <property type="entry name" value="ALCOHOL DEHYDROGENASE"/>
    <property type="match status" value="1"/>
</dbReference>
<dbReference type="PANTHER" id="PTHR43880:SF1">
    <property type="entry name" value="ALCOHOL DEHYDROGENASE 1A"/>
    <property type="match status" value="1"/>
</dbReference>
<dbReference type="Pfam" id="PF08240">
    <property type="entry name" value="ADH_N"/>
    <property type="match status" value="1"/>
</dbReference>
<dbReference type="Pfam" id="PF00107">
    <property type="entry name" value="ADH_zinc_N"/>
    <property type="match status" value="1"/>
</dbReference>
<dbReference type="SMART" id="SM00829">
    <property type="entry name" value="PKS_ER"/>
    <property type="match status" value="1"/>
</dbReference>
<dbReference type="SUPFAM" id="SSF50129">
    <property type="entry name" value="GroES-like"/>
    <property type="match status" value="2"/>
</dbReference>
<dbReference type="SUPFAM" id="SSF51735">
    <property type="entry name" value="NAD(P)-binding Rossmann-fold domains"/>
    <property type="match status" value="1"/>
</dbReference>
<dbReference type="PROSITE" id="PS00059">
    <property type="entry name" value="ADH_ZINC"/>
    <property type="match status" value="1"/>
</dbReference>
<protein>
    <recommendedName>
        <fullName>Alcohol dehydrogenase 1C</fullName>
        <ecNumber evidence="3">1.1.1.1</ecNumber>
    </recommendedName>
    <alternativeName>
        <fullName>Alcohol dehydrogenase subunit gamma</fullName>
    </alternativeName>
</protein>